<organism>
    <name type="scientific">Helicobacter pylori (strain Shi470)</name>
    <dbReference type="NCBI Taxonomy" id="512562"/>
    <lineage>
        <taxon>Bacteria</taxon>
        <taxon>Pseudomonadati</taxon>
        <taxon>Campylobacterota</taxon>
        <taxon>Epsilonproteobacteria</taxon>
        <taxon>Campylobacterales</taxon>
        <taxon>Helicobacteraceae</taxon>
        <taxon>Helicobacter</taxon>
    </lineage>
</organism>
<proteinExistence type="inferred from homology"/>
<comment type="function">
    <text evidence="1">Presumably involved in the processing and regular turnover of intracellular proteins. Catalyzes the removal of unsubstituted N-terminal amino acids from various peptides.</text>
</comment>
<comment type="catalytic activity">
    <reaction evidence="1">
        <text>Release of an N-terminal amino acid, Xaa-|-Yaa-, in which Xaa is preferably Leu, but may be other amino acids including Pro although not Arg or Lys, and Yaa may be Pro. Amino acid amides and methyl esters are also readily hydrolyzed, but rates on arylamides are exceedingly low.</text>
        <dbReference type="EC" id="3.4.11.1"/>
    </reaction>
</comment>
<comment type="catalytic activity">
    <reaction evidence="1">
        <text>Release of an N-terminal amino acid, preferentially leucine, but not glutamic or aspartic acids.</text>
        <dbReference type="EC" id="3.4.11.10"/>
    </reaction>
</comment>
<comment type="cofactor">
    <cofactor evidence="1">
        <name>Mn(2+)</name>
        <dbReference type="ChEBI" id="CHEBI:29035"/>
    </cofactor>
    <text evidence="1">Binds 2 manganese ions per subunit.</text>
</comment>
<comment type="subcellular location">
    <subcellularLocation>
        <location evidence="1">Cytoplasm</location>
    </subcellularLocation>
</comment>
<comment type="similarity">
    <text evidence="1">Belongs to the peptidase M17 family.</text>
</comment>
<reference key="1">
    <citation type="submission" date="2008-05" db="EMBL/GenBank/DDBJ databases">
        <title>Genome sequence of Helicobacter pylori from the remote Amazon: traces of Asian ancestry of the first Americans.</title>
        <authorList>
            <person name="Kersulyte D."/>
            <person name="Kalia A."/>
            <person name="Gilman R.H."/>
            <person name="Berg D.E."/>
        </authorList>
    </citation>
    <scope>NUCLEOTIDE SEQUENCE [LARGE SCALE GENOMIC DNA]</scope>
    <source>
        <strain>Shi470</strain>
    </source>
</reference>
<feature type="chain" id="PRO_1000098326" description="Probable cytosol aminopeptidase">
    <location>
        <begin position="1"/>
        <end position="496"/>
    </location>
</feature>
<feature type="active site" evidence="1">
    <location>
        <position position="270"/>
    </location>
</feature>
<feature type="active site" evidence="1">
    <location>
        <position position="344"/>
    </location>
</feature>
<feature type="binding site" evidence="1">
    <location>
        <position position="258"/>
    </location>
    <ligand>
        <name>Mn(2+)</name>
        <dbReference type="ChEBI" id="CHEBI:29035"/>
        <label>2</label>
    </ligand>
</feature>
<feature type="binding site" evidence="1">
    <location>
        <position position="263"/>
    </location>
    <ligand>
        <name>Mn(2+)</name>
        <dbReference type="ChEBI" id="CHEBI:29035"/>
        <label>1</label>
    </ligand>
</feature>
<feature type="binding site" evidence="1">
    <location>
        <position position="263"/>
    </location>
    <ligand>
        <name>Mn(2+)</name>
        <dbReference type="ChEBI" id="CHEBI:29035"/>
        <label>2</label>
    </ligand>
</feature>
<feature type="binding site" evidence="1">
    <location>
        <position position="281"/>
    </location>
    <ligand>
        <name>Mn(2+)</name>
        <dbReference type="ChEBI" id="CHEBI:29035"/>
        <label>2</label>
    </ligand>
</feature>
<feature type="binding site" evidence="1">
    <location>
        <position position="340"/>
    </location>
    <ligand>
        <name>Mn(2+)</name>
        <dbReference type="ChEBI" id="CHEBI:29035"/>
        <label>1</label>
    </ligand>
</feature>
<feature type="binding site" evidence="1">
    <location>
        <position position="342"/>
    </location>
    <ligand>
        <name>Mn(2+)</name>
        <dbReference type="ChEBI" id="CHEBI:29035"/>
        <label>1</label>
    </ligand>
</feature>
<feature type="binding site" evidence="1">
    <location>
        <position position="342"/>
    </location>
    <ligand>
        <name>Mn(2+)</name>
        <dbReference type="ChEBI" id="CHEBI:29035"/>
        <label>2</label>
    </ligand>
</feature>
<evidence type="ECO:0000255" key="1">
    <source>
        <dbReference type="HAMAP-Rule" id="MF_00181"/>
    </source>
</evidence>
<accession>B2UTQ8</accession>
<keyword id="KW-0031">Aminopeptidase</keyword>
<keyword id="KW-0963">Cytoplasm</keyword>
<keyword id="KW-0378">Hydrolase</keyword>
<keyword id="KW-0464">Manganese</keyword>
<keyword id="KW-0479">Metal-binding</keyword>
<keyword id="KW-0645">Protease</keyword>
<gene>
    <name evidence="1" type="primary">pepA</name>
    <name type="ordered locus">HPSH_04025</name>
</gene>
<dbReference type="EC" id="3.4.11.1" evidence="1"/>
<dbReference type="EC" id="3.4.11.10" evidence="1"/>
<dbReference type="EMBL" id="CP001072">
    <property type="protein sequence ID" value="ACD48240.1"/>
    <property type="molecule type" value="Genomic_DNA"/>
</dbReference>
<dbReference type="RefSeq" id="WP_000912817.1">
    <property type="nucleotide sequence ID" value="NC_010698.2"/>
</dbReference>
<dbReference type="SMR" id="B2UTQ8"/>
<dbReference type="MEROPS" id="M17.016"/>
<dbReference type="KEGG" id="hps:HPSH_04025"/>
<dbReference type="HOGENOM" id="CLU_013734_6_1_7"/>
<dbReference type="GO" id="GO:0005737">
    <property type="term" value="C:cytoplasm"/>
    <property type="evidence" value="ECO:0007669"/>
    <property type="project" value="UniProtKB-SubCell"/>
</dbReference>
<dbReference type="GO" id="GO:0030145">
    <property type="term" value="F:manganese ion binding"/>
    <property type="evidence" value="ECO:0007669"/>
    <property type="project" value="UniProtKB-UniRule"/>
</dbReference>
<dbReference type="GO" id="GO:0070006">
    <property type="term" value="F:metalloaminopeptidase activity"/>
    <property type="evidence" value="ECO:0007669"/>
    <property type="project" value="InterPro"/>
</dbReference>
<dbReference type="GO" id="GO:0006508">
    <property type="term" value="P:proteolysis"/>
    <property type="evidence" value="ECO:0007669"/>
    <property type="project" value="UniProtKB-KW"/>
</dbReference>
<dbReference type="CDD" id="cd00433">
    <property type="entry name" value="Peptidase_M17"/>
    <property type="match status" value="1"/>
</dbReference>
<dbReference type="Gene3D" id="3.40.220.10">
    <property type="entry name" value="Leucine Aminopeptidase, subunit E, domain 1"/>
    <property type="match status" value="1"/>
</dbReference>
<dbReference type="Gene3D" id="3.40.630.10">
    <property type="entry name" value="Zn peptidases"/>
    <property type="match status" value="1"/>
</dbReference>
<dbReference type="HAMAP" id="MF_00181">
    <property type="entry name" value="Cytosol_peptidase_M17"/>
    <property type="match status" value="1"/>
</dbReference>
<dbReference type="InterPro" id="IPR011356">
    <property type="entry name" value="Leucine_aapep/pepB"/>
</dbReference>
<dbReference type="InterPro" id="IPR043472">
    <property type="entry name" value="Macro_dom-like"/>
</dbReference>
<dbReference type="InterPro" id="IPR000819">
    <property type="entry name" value="Peptidase_M17_C"/>
</dbReference>
<dbReference type="InterPro" id="IPR023042">
    <property type="entry name" value="Peptidase_M17_leu_NH2_pept"/>
</dbReference>
<dbReference type="InterPro" id="IPR008283">
    <property type="entry name" value="Peptidase_M17_N"/>
</dbReference>
<dbReference type="NCBIfam" id="NF002079">
    <property type="entry name" value="PRK00913.3-1"/>
    <property type="match status" value="1"/>
</dbReference>
<dbReference type="NCBIfam" id="NF002081">
    <property type="entry name" value="PRK00913.3-3"/>
    <property type="match status" value="1"/>
</dbReference>
<dbReference type="PANTHER" id="PTHR11963:SF23">
    <property type="entry name" value="CYTOSOL AMINOPEPTIDASE"/>
    <property type="match status" value="1"/>
</dbReference>
<dbReference type="PANTHER" id="PTHR11963">
    <property type="entry name" value="LEUCINE AMINOPEPTIDASE-RELATED"/>
    <property type="match status" value="1"/>
</dbReference>
<dbReference type="Pfam" id="PF00883">
    <property type="entry name" value="Peptidase_M17"/>
    <property type="match status" value="1"/>
</dbReference>
<dbReference type="Pfam" id="PF02789">
    <property type="entry name" value="Peptidase_M17_N"/>
    <property type="match status" value="1"/>
</dbReference>
<dbReference type="PRINTS" id="PR00481">
    <property type="entry name" value="LAMNOPPTDASE"/>
</dbReference>
<dbReference type="SUPFAM" id="SSF52949">
    <property type="entry name" value="Macro domain-like"/>
    <property type="match status" value="1"/>
</dbReference>
<dbReference type="SUPFAM" id="SSF53187">
    <property type="entry name" value="Zn-dependent exopeptidases"/>
    <property type="match status" value="1"/>
</dbReference>
<dbReference type="PROSITE" id="PS00631">
    <property type="entry name" value="CYTOSOL_AP"/>
    <property type="match status" value="1"/>
</dbReference>
<name>AMPA_HELPS</name>
<sequence length="496" mass="54537">MLKIKLEKTTFENAKAECGLVFIINKDFDHAWVKNKKLLETFKYEGEGVFLDQENKILYAGVKEDDVHLLRESACLAVRTLKKLAFKSVKVGVYTCDTHSKDNALLENLKALFLGLKLGLYEYDTFKSNKKESVLKEAIVALELHKPCEKTCANSLEKSAKEALKYAEIMTESLNIVRDLVNTPPMIATPVYMAEVAQKVAKENHLEIHVHDEKFLEEKKMNAFLAVNKASLGVNPPRLIHLVYKPKKAKKKIALVGKGLTYDCGGLSLKPADYMVTMKADKGGGSAVIGLLNALAKLGVEAEVHGIIGATENMIGPAAYKPDDILISKEGKSIEVRNTDAEGRLVLADCLSYAQDLSPDVIVDFATLTGACVVGLGEFTSAIMGHNEELKNLFETSGLESGELLAKLPFNRHLKKLIESKIADVCNISSSRYGGAITAGLFLNEFIRDEFKDKWLHIDIAGPAYVEKEWDVNSFGASGAGVRACTAFVEEFLKKA</sequence>
<protein>
    <recommendedName>
        <fullName evidence="1">Probable cytosol aminopeptidase</fullName>
        <ecNumber evidence="1">3.4.11.1</ecNumber>
    </recommendedName>
    <alternativeName>
        <fullName evidence="1">Leucine aminopeptidase</fullName>
        <shortName evidence="1">LAP</shortName>
        <ecNumber evidence="1">3.4.11.10</ecNumber>
    </alternativeName>
    <alternativeName>
        <fullName evidence="1">Leucyl aminopeptidase</fullName>
    </alternativeName>
</protein>